<reference key="1">
    <citation type="journal article" date="1998" name="Mol. Gen. Genet.">
        <title>Isolation and characterization of hrp1+, a new member of the SNF2/SWI2 gene family from the fission yeast Schizosaccharomyces pombe.</title>
        <authorList>
            <person name="Jin Y.H."/>
            <person name="Yoo E.J."/>
            <person name="Jang Y.K."/>
            <person name="Kim S.H."/>
            <person name="Kim M.J."/>
            <person name="Shim Y.S."/>
            <person name="Lee J.S."/>
            <person name="Choi I.S."/>
            <person name="Seong R.H."/>
            <person name="Hong S.H."/>
            <person name="Park S.D."/>
        </authorList>
    </citation>
    <scope>NUCLEOTIDE SEQUENCE [GENOMIC DNA]</scope>
    <source>
        <strain>JY741</strain>
    </source>
</reference>
<reference key="2">
    <citation type="journal article" date="2002" name="Nature">
        <title>The genome sequence of Schizosaccharomyces pombe.</title>
        <authorList>
            <person name="Wood V."/>
            <person name="Gwilliam R."/>
            <person name="Rajandream M.A."/>
            <person name="Lyne M.H."/>
            <person name="Lyne R."/>
            <person name="Stewart A."/>
            <person name="Sgouros J.G."/>
            <person name="Peat N."/>
            <person name="Hayles J."/>
            <person name="Baker S.G."/>
            <person name="Basham D."/>
            <person name="Bowman S."/>
            <person name="Brooks K."/>
            <person name="Brown D."/>
            <person name="Brown S."/>
            <person name="Chillingworth T."/>
            <person name="Churcher C.M."/>
            <person name="Collins M."/>
            <person name="Connor R."/>
            <person name="Cronin A."/>
            <person name="Davis P."/>
            <person name="Feltwell T."/>
            <person name="Fraser A."/>
            <person name="Gentles S."/>
            <person name="Goble A."/>
            <person name="Hamlin N."/>
            <person name="Harris D.E."/>
            <person name="Hidalgo J."/>
            <person name="Hodgson G."/>
            <person name="Holroyd S."/>
            <person name="Hornsby T."/>
            <person name="Howarth S."/>
            <person name="Huckle E.J."/>
            <person name="Hunt S."/>
            <person name="Jagels K."/>
            <person name="James K.D."/>
            <person name="Jones L."/>
            <person name="Jones M."/>
            <person name="Leather S."/>
            <person name="McDonald S."/>
            <person name="McLean J."/>
            <person name="Mooney P."/>
            <person name="Moule S."/>
            <person name="Mungall K.L."/>
            <person name="Murphy L.D."/>
            <person name="Niblett D."/>
            <person name="Odell C."/>
            <person name="Oliver K."/>
            <person name="O'Neil S."/>
            <person name="Pearson D."/>
            <person name="Quail M.A."/>
            <person name="Rabbinowitsch E."/>
            <person name="Rutherford K.M."/>
            <person name="Rutter S."/>
            <person name="Saunders D."/>
            <person name="Seeger K."/>
            <person name="Sharp S."/>
            <person name="Skelton J."/>
            <person name="Simmonds M.N."/>
            <person name="Squares R."/>
            <person name="Squares S."/>
            <person name="Stevens K."/>
            <person name="Taylor K."/>
            <person name="Taylor R.G."/>
            <person name="Tivey A."/>
            <person name="Walsh S.V."/>
            <person name="Warren T."/>
            <person name="Whitehead S."/>
            <person name="Woodward J.R."/>
            <person name="Volckaert G."/>
            <person name="Aert R."/>
            <person name="Robben J."/>
            <person name="Grymonprez B."/>
            <person name="Weltjens I."/>
            <person name="Vanstreels E."/>
            <person name="Rieger M."/>
            <person name="Schaefer M."/>
            <person name="Mueller-Auer S."/>
            <person name="Gabel C."/>
            <person name="Fuchs M."/>
            <person name="Duesterhoeft A."/>
            <person name="Fritzc C."/>
            <person name="Holzer E."/>
            <person name="Moestl D."/>
            <person name="Hilbert H."/>
            <person name="Borzym K."/>
            <person name="Langer I."/>
            <person name="Beck A."/>
            <person name="Lehrach H."/>
            <person name="Reinhardt R."/>
            <person name="Pohl T.M."/>
            <person name="Eger P."/>
            <person name="Zimmermann W."/>
            <person name="Wedler H."/>
            <person name="Wambutt R."/>
            <person name="Purnelle B."/>
            <person name="Goffeau A."/>
            <person name="Cadieu E."/>
            <person name="Dreano S."/>
            <person name="Gloux S."/>
            <person name="Lelaure V."/>
            <person name="Mottier S."/>
            <person name="Galibert F."/>
            <person name="Aves S.J."/>
            <person name="Xiang Z."/>
            <person name="Hunt C."/>
            <person name="Moore K."/>
            <person name="Hurst S.M."/>
            <person name="Lucas M."/>
            <person name="Rochet M."/>
            <person name="Gaillardin C."/>
            <person name="Tallada V.A."/>
            <person name="Garzon A."/>
            <person name="Thode G."/>
            <person name="Daga R.R."/>
            <person name="Cruzado L."/>
            <person name="Jimenez J."/>
            <person name="Sanchez M."/>
            <person name="del Rey F."/>
            <person name="Benito J."/>
            <person name="Dominguez A."/>
            <person name="Revuelta J.L."/>
            <person name="Moreno S."/>
            <person name="Armstrong J."/>
            <person name="Forsburg S.L."/>
            <person name="Cerutti L."/>
            <person name="Lowe T."/>
            <person name="McCombie W.R."/>
            <person name="Paulsen I."/>
            <person name="Potashkin J."/>
            <person name="Shpakovski G.V."/>
            <person name="Ussery D."/>
            <person name="Barrell B.G."/>
            <person name="Nurse P."/>
        </authorList>
    </citation>
    <scope>NUCLEOTIDE SEQUENCE [LARGE SCALE GENOMIC DNA]</scope>
    <source>
        <strain>972 / ATCC 24843</strain>
    </source>
</reference>
<reference key="3">
    <citation type="journal article" date="2000" name="Genes Cells">
        <title>Large-scale screening of intracellular protein localization in living fission yeast cells by the use of a GFP-fusion genomic DNA library.</title>
        <authorList>
            <person name="Ding D.-Q."/>
            <person name="Tomita Y."/>
            <person name="Yamamoto A."/>
            <person name="Chikashige Y."/>
            <person name="Haraguchi T."/>
            <person name="Hiraoka Y."/>
        </authorList>
    </citation>
    <scope>NUCLEOTIDE SEQUENCE [LARGE SCALE GENOMIC DNA] OF 852-1021</scope>
    <source>
        <strain>ATCC 38364 / 968</strain>
    </source>
</reference>
<reference key="4">
    <citation type="journal article" date="2000" name="Nucleic Acids Res.">
        <title>Fission yeast hrp1, a chromodomain ATPase, is required for proper chromosome segregation and its overexpression interferes with chromatin condensation.</title>
        <authorList>
            <person name="Yoo E.J."/>
            <person name="Jin Y.H."/>
            <person name="Jang Y.K."/>
            <person name="Bjerling P."/>
            <person name="Tabish M."/>
            <person name="Hong S.H."/>
            <person name="Ekwall K."/>
            <person name="Park S.D."/>
        </authorList>
    </citation>
    <scope>CHARACTERIZATION</scope>
</reference>
<reference key="5">
    <citation type="journal article" date="2008" name="J. Proteome Res.">
        <title>Phosphoproteome analysis of fission yeast.</title>
        <authorList>
            <person name="Wilson-Grady J.T."/>
            <person name="Villen J."/>
            <person name="Gygi S.P."/>
        </authorList>
    </citation>
    <scope>PHOSPHORYLATION [LARGE SCALE ANALYSIS] AT SER-142; SER-145; THR-1259; SER-1260 AND THR-1264</scope>
    <scope>IDENTIFICATION BY MASS SPECTROMETRY</scope>
</reference>
<dbReference type="EC" id="3.6.4.-"/>
<dbReference type="EMBL" id="X99021">
    <property type="protein sequence ID" value="CAA67494.1"/>
    <property type="molecule type" value="Genomic_DNA"/>
</dbReference>
<dbReference type="EMBL" id="CU329670">
    <property type="protein sequence ID" value="CAB66168.1"/>
    <property type="molecule type" value="Genomic_DNA"/>
</dbReference>
<dbReference type="EMBL" id="AB027852">
    <property type="protein sequence ID" value="BAA87156.1"/>
    <property type="molecule type" value="Genomic_DNA"/>
</dbReference>
<dbReference type="PIR" id="T43334">
    <property type="entry name" value="T43334"/>
</dbReference>
<dbReference type="PIR" id="T50107">
    <property type="entry name" value="T50107"/>
</dbReference>
<dbReference type="RefSeq" id="NP_593660.1">
    <property type="nucleotide sequence ID" value="NM_001019092.2"/>
</dbReference>
<dbReference type="SMR" id="Q9US25"/>
<dbReference type="BioGRID" id="278827">
    <property type="interactions" value="80"/>
</dbReference>
<dbReference type="FunCoup" id="Q9US25">
    <property type="interactions" value="573"/>
</dbReference>
<dbReference type="IntAct" id="Q9US25">
    <property type="interactions" value="7"/>
</dbReference>
<dbReference type="MINT" id="Q9US25"/>
<dbReference type="STRING" id="284812.Q9US25"/>
<dbReference type="iPTMnet" id="Q9US25"/>
<dbReference type="PaxDb" id="4896-SPAC1783.05.1"/>
<dbReference type="EnsemblFungi" id="SPAC1783.05.1">
    <property type="protein sequence ID" value="SPAC1783.05.1:pep"/>
    <property type="gene ID" value="SPAC1783.05"/>
</dbReference>
<dbReference type="GeneID" id="2542363"/>
<dbReference type="KEGG" id="spo:2542363"/>
<dbReference type="PomBase" id="SPAC1783.05">
    <property type="gene designation" value="hrp1"/>
</dbReference>
<dbReference type="VEuPathDB" id="FungiDB:SPAC1783.05"/>
<dbReference type="eggNOG" id="KOG0384">
    <property type="taxonomic scope" value="Eukaryota"/>
</dbReference>
<dbReference type="HOGENOM" id="CLU_000315_29_2_1"/>
<dbReference type="InParanoid" id="Q9US25"/>
<dbReference type="OMA" id="GYKKVDN"/>
<dbReference type="PhylomeDB" id="Q9US25"/>
<dbReference type="PRO" id="PR:Q9US25"/>
<dbReference type="Proteomes" id="UP000002485">
    <property type="component" value="Chromosome I"/>
</dbReference>
<dbReference type="GO" id="GO:0061638">
    <property type="term" value="C:CENP-A containing chromatin"/>
    <property type="evidence" value="ECO:0000314"/>
    <property type="project" value="PomBase"/>
</dbReference>
<dbReference type="GO" id="GO:0000785">
    <property type="term" value="C:chromatin"/>
    <property type="evidence" value="ECO:0000314"/>
    <property type="project" value="PomBase"/>
</dbReference>
<dbReference type="GO" id="GO:0000779">
    <property type="term" value="C:condensed chromosome, centromeric region"/>
    <property type="evidence" value="ECO:0000314"/>
    <property type="project" value="PomBase"/>
</dbReference>
<dbReference type="GO" id="GO:0005634">
    <property type="term" value="C:nucleus"/>
    <property type="evidence" value="ECO:0000314"/>
    <property type="project" value="PomBase"/>
</dbReference>
<dbReference type="GO" id="GO:0005524">
    <property type="term" value="F:ATP binding"/>
    <property type="evidence" value="ECO:0007669"/>
    <property type="project" value="UniProtKB-KW"/>
</dbReference>
<dbReference type="GO" id="GO:0016887">
    <property type="term" value="F:ATP hydrolysis activity"/>
    <property type="evidence" value="ECO:0000318"/>
    <property type="project" value="GO_Central"/>
</dbReference>
<dbReference type="GO" id="GO:0140658">
    <property type="term" value="F:ATP-dependent chromatin remodeler activity"/>
    <property type="evidence" value="ECO:0000314"/>
    <property type="project" value="PomBase"/>
</dbReference>
<dbReference type="GO" id="GO:0003682">
    <property type="term" value="F:chromatin binding"/>
    <property type="evidence" value="ECO:0000318"/>
    <property type="project" value="GO_Central"/>
</dbReference>
<dbReference type="GO" id="GO:0003677">
    <property type="term" value="F:DNA binding"/>
    <property type="evidence" value="ECO:0000318"/>
    <property type="project" value="GO_Central"/>
</dbReference>
<dbReference type="GO" id="GO:0004386">
    <property type="term" value="F:helicase activity"/>
    <property type="evidence" value="ECO:0007669"/>
    <property type="project" value="UniProtKB-KW"/>
</dbReference>
<dbReference type="GO" id="GO:0042393">
    <property type="term" value="F:histone binding"/>
    <property type="evidence" value="ECO:0000318"/>
    <property type="project" value="GO_Central"/>
</dbReference>
<dbReference type="GO" id="GO:0140713">
    <property type="term" value="F:histone chaperone activity"/>
    <property type="evidence" value="ECO:0000303"/>
    <property type="project" value="PomBase"/>
</dbReference>
<dbReference type="GO" id="GO:0034080">
    <property type="term" value="P:CENP-A containing chromatin assembly"/>
    <property type="evidence" value="ECO:0000315"/>
    <property type="project" value="PomBase"/>
</dbReference>
<dbReference type="GO" id="GO:0006338">
    <property type="term" value="P:chromatin remodeling"/>
    <property type="evidence" value="ECO:0000315"/>
    <property type="project" value="PomBase"/>
</dbReference>
<dbReference type="GO" id="GO:0006335">
    <property type="term" value="P:DNA replication-dependent chromatin assembly"/>
    <property type="evidence" value="ECO:0000315"/>
    <property type="project" value="PomBase"/>
</dbReference>
<dbReference type="GO" id="GO:0006337">
    <property type="term" value="P:nucleosome disassembly"/>
    <property type="evidence" value="ECO:0000269"/>
    <property type="project" value="PomBase"/>
</dbReference>
<dbReference type="GO" id="GO:0034728">
    <property type="term" value="P:nucleosome organization"/>
    <property type="evidence" value="ECO:0000318"/>
    <property type="project" value="GO_Central"/>
</dbReference>
<dbReference type="GO" id="GO:0140673">
    <property type="term" value="P:transcription elongation-coupled chromatin remodeling"/>
    <property type="evidence" value="ECO:0000304"/>
    <property type="project" value="PomBase"/>
</dbReference>
<dbReference type="GO" id="GO:0045815">
    <property type="term" value="P:transcription initiation-coupled chromatin remodeling"/>
    <property type="evidence" value="ECO:0000269"/>
    <property type="project" value="PomBase"/>
</dbReference>
<dbReference type="CDD" id="cd18665">
    <property type="entry name" value="CD1_tandem_CHD1_yeast_like"/>
    <property type="match status" value="1"/>
</dbReference>
<dbReference type="CDD" id="cd18659">
    <property type="entry name" value="CD2_tandem"/>
    <property type="match status" value="1"/>
</dbReference>
<dbReference type="CDD" id="cd17993">
    <property type="entry name" value="DEXHc_CHD1_2"/>
    <property type="match status" value="1"/>
</dbReference>
<dbReference type="CDD" id="cd18793">
    <property type="entry name" value="SF2_C_SNF"/>
    <property type="match status" value="1"/>
</dbReference>
<dbReference type="FunFam" id="2.40.50.40:FF:000038">
    <property type="entry name" value="Chromo domain-containing protein 1"/>
    <property type="match status" value="1"/>
</dbReference>
<dbReference type="FunFam" id="1.10.10.60:FF:000376">
    <property type="entry name" value="Chromodomain-helicase-DNA-binding protein 1"/>
    <property type="match status" value="1"/>
</dbReference>
<dbReference type="FunFam" id="3.40.50.10810:FF:000007">
    <property type="entry name" value="Chromodomain-helicase-DNA-binding protein 2 isoform 1"/>
    <property type="match status" value="1"/>
</dbReference>
<dbReference type="FunFam" id="3.40.50.300:FF:000130">
    <property type="entry name" value="Chromodomain-helicase-DNA-binding protein 2 isoform 1"/>
    <property type="match status" value="1"/>
</dbReference>
<dbReference type="Gene3D" id="2.40.50.40">
    <property type="match status" value="2"/>
</dbReference>
<dbReference type="Gene3D" id="6.10.140.1440">
    <property type="match status" value="1"/>
</dbReference>
<dbReference type="Gene3D" id="1.10.10.60">
    <property type="entry name" value="Homeodomain-like"/>
    <property type="match status" value="1"/>
</dbReference>
<dbReference type="Gene3D" id="3.40.50.300">
    <property type="entry name" value="P-loop containing nucleotide triphosphate hydrolases"/>
    <property type="match status" value="1"/>
</dbReference>
<dbReference type="Gene3D" id="3.40.50.10810">
    <property type="entry name" value="Tandem AAA-ATPase domain"/>
    <property type="match status" value="1"/>
</dbReference>
<dbReference type="InterPro" id="IPR056302">
    <property type="entry name" value="CHD1-2/Hrp3_HTH"/>
</dbReference>
<dbReference type="InterPro" id="IPR016197">
    <property type="entry name" value="Chromo-like_dom_sf"/>
</dbReference>
<dbReference type="InterPro" id="IPR000953">
    <property type="entry name" value="Chromo/chromo_shadow_dom"/>
</dbReference>
<dbReference type="InterPro" id="IPR023780">
    <property type="entry name" value="Chromo_domain"/>
</dbReference>
<dbReference type="InterPro" id="IPR014001">
    <property type="entry name" value="Helicase_ATP-bd"/>
</dbReference>
<dbReference type="InterPro" id="IPR001650">
    <property type="entry name" value="Helicase_C-like"/>
</dbReference>
<dbReference type="InterPro" id="IPR027417">
    <property type="entry name" value="P-loop_NTPase"/>
</dbReference>
<dbReference type="InterPro" id="IPR038718">
    <property type="entry name" value="SNF2-like_sf"/>
</dbReference>
<dbReference type="InterPro" id="IPR049730">
    <property type="entry name" value="SNF2/RAD54-like_C"/>
</dbReference>
<dbReference type="InterPro" id="IPR000330">
    <property type="entry name" value="SNF2_N"/>
</dbReference>
<dbReference type="PANTHER" id="PTHR45623:SF52">
    <property type="entry name" value="CHROMODOMAIN HELICASE HRP1"/>
    <property type="match status" value="1"/>
</dbReference>
<dbReference type="PANTHER" id="PTHR45623">
    <property type="entry name" value="CHROMODOMAIN-HELICASE-DNA-BINDING PROTEIN 3-RELATED-RELATED"/>
    <property type="match status" value="1"/>
</dbReference>
<dbReference type="Pfam" id="PF00385">
    <property type="entry name" value="Chromo"/>
    <property type="match status" value="2"/>
</dbReference>
<dbReference type="Pfam" id="PF00271">
    <property type="entry name" value="Helicase_C"/>
    <property type="match status" value="1"/>
</dbReference>
<dbReference type="Pfam" id="PF23588">
    <property type="entry name" value="HTH_CHD1_Hrp3"/>
    <property type="match status" value="1"/>
</dbReference>
<dbReference type="Pfam" id="PF00176">
    <property type="entry name" value="SNF2-rel_dom"/>
    <property type="match status" value="1"/>
</dbReference>
<dbReference type="SMART" id="SM00298">
    <property type="entry name" value="CHROMO"/>
    <property type="match status" value="2"/>
</dbReference>
<dbReference type="SMART" id="SM00487">
    <property type="entry name" value="DEXDc"/>
    <property type="match status" value="1"/>
</dbReference>
<dbReference type="SMART" id="SM00490">
    <property type="entry name" value="HELICc"/>
    <property type="match status" value="1"/>
</dbReference>
<dbReference type="SUPFAM" id="SSF54160">
    <property type="entry name" value="Chromo domain-like"/>
    <property type="match status" value="2"/>
</dbReference>
<dbReference type="SUPFAM" id="SSF52540">
    <property type="entry name" value="P-loop containing nucleoside triphosphate hydrolases"/>
    <property type="match status" value="2"/>
</dbReference>
<dbReference type="PROSITE" id="PS50013">
    <property type="entry name" value="CHROMO_2"/>
    <property type="match status" value="2"/>
</dbReference>
<dbReference type="PROSITE" id="PS51192">
    <property type="entry name" value="HELICASE_ATP_BIND_1"/>
    <property type="match status" value="1"/>
</dbReference>
<dbReference type="PROSITE" id="PS51194">
    <property type="entry name" value="HELICASE_CTER"/>
    <property type="match status" value="1"/>
</dbReference>
<feature type="chain" id="PRO_0000080241" description="Chromodomain helicase hrp1">
    <location>
        <begin position="1"/>
        <end position="1373"/>
    </location>
</feature>
<feature type="domain" description="Chromo 1" evidence="1">
    <location>
        <begin position="203"/>
        <end position="276"/>
    </location>
</feature>
<feature type="domain" description="Chromo 2" evidence="1">
    <location>
        <begin position="304"/>
        <end position="365"/>
    </location>
</feature>
<feature type="domain" description="Helicase ATP-binding" evidence="2">
    <location>
        <begin position="402"/>
        <end position="573"/>
    </location>
</feature>
<feature type="domain" description="Helicase C-terminal" evidence="3">
    <location>
        <begin position="708"/>
        <end position="869"/>
    </location>
</feature>
<feature type="region of interest" description="Disordered" evidence="4">
    <location>
        <begin position="1"/>
        <end position="110"/>
    </location>
</feature>
<feature type="region of interest" description="Disordered" evidence="4">
    <location>
        <begin position="123"/>
        <end position="159"/>
    </location>
</feature>
<feature type="region of interest" description="Disordered" evidence="4">
    <location>
        <begin position="955"/>
        <end position="1004"/>
    </location>
</feature>
<feature type="region of interest" description="Disordered" evidence="4">
    <location>
        <begin position="1210"/>
        <end position="1373"/>
    </location>
</feature>
<feature type="short sequence motif" description="DEAH box">
    <location>
        <begin position="524"/>
        <end position="527"/>
    </location>
</feature>
<feature type="compositionally biased region" description="Basic and acidic residues" evidence="4">
    <location>
        <begin position="1"/>
        <end position="12"/>
    </location>
</feature>
<feature type="compositionally biased region" description="Polar residues" evidence="4">
    <location>
        <begin position="13"/>
        <end position="41"/>
    </location>
</feature>
<feature type="compositionally biased region" description="Low complexity" evidence="4">
    <location>
        <begin position="51"/>
        <end position="84"/>
    </location>
</feature>
<feature type="compositionally biased region" description="Basic and acidic residues" evidence="4">
    <location>
        <begin position="86"/>
        <end position="102"/>
    </location>
</feature>
<feature type="compositionally biased region" description="Basic residues" evidence="4">
    <location>
        <begin position="128"/>
        <end position="141"/>
    </location>
</feature>
<feature type="compositionally biased region" description="Basic and acidic residues" evidence="4">
    <location>
        <begin position="965"/>
        <end position="987"/>
    </location>
</feature>
<feature type="compositionally biased region" description="Basic residues" evidence="4">
    <location>
        <begin position="988"/>
        <end position="1002"/>
    </location>
</feature>
<feature type="compositionally biased region" description="Polar residues" evidence="4">
    <location>
        <begin position="1223"/>
        <end position="1236"/>
    </location>
</feature>
<feature type="compositionally biased region" description="Basic and acidic residues" evidence="4">
    <location>
        <begin position="1248"/>
        <end position="1258"/>
    </location>
</feature>
<feature type="compositionally biased region" description="Polar residues" evidence="4">
    <location>
        <begin position="1285"/>
        <end position="1309"/>
    </location>
</feature>
<feature type="compositionally biased region" description="Basic and acidic residues" evidence="4">
    <location>
        <begin position="1325"/>
        <end position="1340"/>
    </location>
</feature>
<feature type="compositionally biased region" description="Acidic residues" evidence="4">
    <location>
        <begin position="1348"/>
        <end position="1358"/>
    </location>
</feature>
<feature type="binding site" evidence="2">
    <location>
        <begin position="415"/>
        <end position="422"/>
    </location>
    <ligand>
        <name>ATP</name>
        <dbReference type="ChEBI" id="CHEBI:30616"/>
    </ligand>
</feature>
<feature type="modified residue" description="Phosphoserine" evidence="5">
    <location>
        <position position="142"/>
    </location>
</feature>
<feature type="modified residue" description="Phosphoserine" evidence="5">
    <location>
        <position position="145"/>
    </location>
</feature>
<feature type="modified residue" description="Phosphothreonine" evidence="5">
    <location>
        <position position="1259"/>
    </location>
</feature>
<feature type="modified residue" description="Phosphoserine" evidence="5">
    <location>
        <position position="1260"/>
    </location>
</feature>
<feature type="modified residue" description="Phosphothreonine" evidence="5">
    <location>
        <position position="1264"/>
    </location>
</feature>
<feature type="sequence conflict" description="In Ref. 1; CAA67494." evidence="6" ref="1">
    <original>I</original>
    <variation>M</variation>
    <location>
        <position position="68"/>
    </location>
</feature>
<feature type="sequence conflict" description="In Ref. 1; CAA67494." evidence="6" ref="1">
    <original>S</original>
    <variation>R</variation>
    <location>
        <position position="133"/>
    </location>
</feature>
<feature type="sequence conflict" description="In Ref. 1; CAA67494." evidence="6" ref="1">
    <original>D</original>
    <variation>G</variation>
    <location>
        <position position="225"/>
    </location>
</feature>
<feature type="sequence conflict" description="In Ref. 1; CAA67494." evidence="6" ref="1">
    <original>A</original>
    <variation>S</variation>
    <location>
        <position position="339"/>
    </location>
</feature>
<feature type="sequence conflict" description="In Ref. 1; CAA67494." evidence="6" ref="1">
    <original>I</original>
    <variation>M</variation>
    <location>
        <position position="385"/>
    </location>
</feature>
<feature type="sequence conflict" description="In Ref. 1; CAA67494." evidence="6" ref="1">
    <original>NIREYEFYLST</original>
    <variation>ILESM</variation>
    <location>
        <begin position="479"/>
        <end position="489"/>
    </location>
</feature>
<keyword id="KW-0067">ATP-binding</keyword>
<keyword id="KW-0238">DNA-binding</keyword>
<keyword id="KW-0347">Helicase</keyword>
<keyword id="KW-0378">Hydrolase</keyword>
<keyword id="KW-0547">Nucleotide-binding</keyword>
<keyword id="KW-0539">Nucleus</keyword>
<keyword id="KW-0597">Phosphoprotein</keyword>
<keyword id="KW-1185">Reference proteome</keyword>
<keyword id="KW-0677">Repeat</keyword>
<comment type="function">
    <text>Seems to play a role in mitotic chromosome segregation and maintenance of chromatin structure. Has ATPase activity.</text>
</comment>
<comment type="interaction">
    <interactant intactId="EBI-7414005">
        <id>Q9US25</id>
    </interactant>
    <interactant intactId="EBI-7414085">
        <id>O59797</id>
        <label>SPCC364.06</label>
    </interactant>
    <organismsDiffer>false</organismsDiffer>
    <experiments>2</experiments>
</comment>
<comment type="subcellular location">
    <subcellularLocation>
        <location>Nucleus</location>
    </subcellularLocation>
</comment>
<comment type="similarity">
    <text evidence="6">Belongs to the SNF2/RAD54 helicase family.</text>
</comment>
<protein>
    <recommendedName>
        <fullName>Chromodomain helicase hrp1</fullName>
        <ecNumber>3.6.4.-</ecNumber>
    </recommendedName>
    <alternativeName>
        <fullName>ATP-dependent helicase hrp1</fullName>
    </alternativeName>
</protein>
<sequence>MEPEHSNYDLKNHPTSVQESTLNGSAVTDPQFGNTTNSLPSMNGLLNHENSFASQQSLSSSAFDDSEIVTSTANSTVVSSALSTPKIDDAQNSDDVRVDGTRRSSRAKRPVYRDFSYTEIDEHEIPIPKKRKSKPAPKQKKSVASDDEDAYDKRHRFSINSASGTEIRTSLRSSKGKSVNYNEQEFYDDFEDEEEEVEEQVEEEYEPIIDFVLNHRKRADAQDDDPKSSYQYLIKWQEVSHLHNTWEDYSTLSSVRGYKKVDNYIKQNIIYDREIREDPTTTFEDIEALDIERERKNMLFEEYKIVERIVASETNEEGKTEYFVKWRQLPYDNCTWEDADVIYSMAPNEVYQFLQRENSPYLPYKGVFYNTRPPYRKLEKQPSYIKGGEIRDFQLTGINWMAYLWHRNENGILADEMGLGKTVQTVCFLSYLVHSLKQHGPFLIVVPLSTVPAWQETLANWTPDLNSICYTGNTESRANIREYEFYLSTNSRKLKFNILLTTYEYILKDKQELNNIRWQYLAIDEAHRLKNSESSLYETLSQFRTANRLLITGTPLQNNLKELASLVNFLMPGKFYIRDELNFDQPNAEQERDIRDLQERLQPFILRRLKKDVEKSLPSKSERILRVELSDMQTEWYKNILTKNYRALTGHTDGRGQLSLLNIVVELKKVSNHPYLFPGAAEKWMMGRKMTREDTLRGIIMNSGKMVLLDKLLQRLKHDGHRVLIFSQMVRMLNILGEYMSLRGYNYQRLDGTIPASVRRVSIDHFNAPDSPDFVFLLSTRAGGLGINLNTADTVIIFDSDWNPQADLQAMARAHRIGQKNHVNVYRFLSKDTVEEDILERARRKMILEYAIISLGVTEKSKNSKNDKYDAQELSAILKFGASNMFKATENQKKLENMNLDDILSHAEDRDSSNDVGGASMGGEEFLKQFEVTDYKAEDLNWDDIIPEEEMERIEEEERMLAAQRAKEEERERREEEERENDEDHPSRTYKRTTKSITKRQQRREEMVREKEIRLLYRAMIKFGLVDERFDTIVKEAELQATDPKRIYSLSADMVKACDEAVERLGADDTKNKQPRKAILIEFKGVKNINAETVTLRVKDLTHLHRAYKGLDPLKQIIGYPIRSVHSWNCSWGIKEDSMLLAGINKHGFGCWQAIKNDPDLGLHDKIFLDEAKNDKESRYVPSAVHLVRRGEYLLSVVREHPDLFVVKTDQPTKRKYNRKAPTKSSTRQTTLDGSISNTKKSSRTKKKKEEETNRGDETSPEGTVGEDEVEEEPRQAEPPKRALRSNSGKAASNKRTTRNSMKTHSAMDTLTAVAALDAELDNMSNEKAKEEVDHVKSENGESVNEPNTEDLSLETEENTTVSDISPLVKNEA</sequence>
<proteinExistence type="evidence at protein level"/>
<accession>Q9US25</accession>
<accession>Q92369</accession>
<accession>Q9UU28</accession>
<gene>
    <name type="primary">hrp1</name>
    <name type="ORF">SPAC1783.05</name>
</gene>
<name>HRP1_SCHPO</name>
<organism>
    <name type="scientific">Schizosaccharomyces pombe (strain 972 / ATCC 24843)</name>
    <name type="common">Fission yeast</name>
    <dbReference type="NCBI Taxonomy" id="284812"/>
    <lineage>
        <taxon>Eukaryota</taxon>
        <taxon>Fungi</taxon>
        <taxon>Dikarya</taxon>
        <taxon>Ascomycota</taxon>
        <taxon>Taphrinomycotina</taxon>
        <taxon>Schizosaccharomycetes</taxon>
        <taxon>Schizosaccharomycetales</taxon>
        <taxon>Schizosaccharomycetaceae</taxon>
        <taxon>Schizosaccharomyces</taxon>
    </lineage>
</organism>
<evidence type="ECO:0000255" key="1">
    <source>
        <dbReference type="PROSITE-ProRule" id="PRU00053"/>
    </source>
</evidence>
<evidence type="ECO:0000255" key="2">
    <source>
        <dbReference type="PROSITE-ProRule" id="PRU00541"/>
    </source>
</evidence>
<evidence type="ECO:0000255" key="3">
    <source>
        <dbReference type="PROSITE-ProRule" id="PRU00542"/>
    </source>
</evidence>
<evidence type="ECO:0000256" key="4">
    <source>
        <dbReference type="SAM" id="MobiDB-lite"/>
    </source>
</evidence>
<evidence type="ECO:0000269" key="5">
    <source>
    </source>
</evidence>
<evidence type="ECO:0000305" key="6"/>